<organism>
    <name type="scientific">Oryza sativa subsp. japonica</name>
    <name type="common">Rice</name>
    <dbReference type="NCBI Taxonomy" id="39947"/>
    <lineage>
        <taxon>Eukaryota</taxon>
        <taxon>Viridiplantae</taxon>
        <taxon>Streptophyta</taxon>
        <taxon>Embryophyta</taxon>
        <taxon>Tracheophyta</taxon>
        <taxon>Spermatophyta</taxon>
        <taxon>Magnoliopsida</taxon>
        <taxon>Liliopsida</taxon>
        <taxon>Poales</taxon>
        <taxon>Poaceae</taxon>
        <taxon>BOP clade</taxon>
        <taxon>Oryzoideae</taxon>
        <taxon>Oryzeae</taxon>
        <taxon>Oryzinae</taxon>
        <taxon>Oryza</taxon>
        <taxon>Oryza sativa</taxon>
    </lineage>
</organism>
<reference key="1">
    <citation type="journal article" date="2005" name="Nature">
        <title>The map-based sequence of the rice genome.</title>
        <authorList>
            <consortium name="International rice genome sequencing project (IRGSP)"/>
        </authorList>
    </citation>
    <scope>NUCLEOTIDE SEQUENCE [LARGE SCALE GENOMIC DNA]</scope>
    <source>
        <strain>cv. Nipponbare</strain>
    </source>
</reference>
<reference key="2">
    <citation type="journal article" date="2008" name="Nucleic Acids Res.">
        <title>The rice annotation project database (RAP-DB): 2008 update.</title>
        <authorList>
            <consortium name="The rice annotation project (RAP)"/>
        </authorList>
    </citation>
    <scope>GENOME REANNOTATION</scope>
    <source>
        <strain>cv. Nipponbare</strain>
    </source>
</reference>
<reference key="3">
    <citation type="journal article" date="2013" name="Rice">
        <title>Improvement of the Oryza sativa Nipponbare reference genome using next generation sequence and optical map data.</title>
        <authorList>
            <person name="Kawahara Y."/>
            <person name="de la Bastide M."/>
            <person name="Hamilton J.P."/>
            <person name="Kanamori H."/>
            <person name="McCombie W.R."/>
            <person name="Ouyang S."/>
            <person name="Schwartz D.C."/>
            <person name="Tanaka T."/>
            <person name="Wu J."/>
            <person name="Zhou S."/>
            <person name="Childs K.L."/>
            <person name="Davidson R.M."/>
            <person name="Lin H."/>
            <person name="Quesada-Ocampo L."/>
            <person name="Vaillancourt B."/>
            <person name="Sakai H."/>
            <person name="Lee S.S."/>
            <person name="Kim J."/>
            <person name="Numa H."/>
            <person name="Itoh T."/>
            <person name="Buell C.R."/>
            <person name="Matsumoto T."/>
        </authorList>
    </citation>
    <scope>GENOME REANNOTATION</scope>
    <source>
        <strain>cv. Nipponbare</strain>
    </source>
</reference>
<reference key="4">
    <citation type="journal article" date="2005" name="PLoS Biol.">
        <title>The genomes of Oryza sativa: a history of duplications.</title>
        <authorList>
            <person name="Yu J."/>
            <person name="Wang J."/>
            <person name="Lin W."/>
            <person name="Li S."/>
            <person name="Li H."/>
            <person name="Zhou J."/>
            <person name="Ni P."/>
            <person name="Dong W."/>
            <person name="Hu S."/>
            <person name="Zeng C."/>
            <person name="Zhang J."/>
            <person name="Zhang Y."/>
            <person name="Li R."/>
            <person name="Xu Z."/>
            <person name="Li S."/>
            <person name="Li X."/>
            <person name="Zheng H."/>
            <person name="Cong L."/>
            <person name="Lin L."/>
            <person name="Yin J."/>
            <person name="Geng J."/>
            <person name="Li G."/>
            <person name="Shi J."/>
            <person name="Liu J."/>
            <person name="Lv H."/>
            <person name="Li J."/>
            <person name="Wang J."/>
            <person name="Deng Y."/>
            <person name="Ran L."/>
            <person name="Shi X."/>
            <person name="Wang X."/>
            <person name="Wu Q."/>
            <person name="Li C."/>
            <person name="Ren X."/>
            <person name="Wang J."/>
            <person name="Wang X."/>
            <person name="Li D."/>
            <person name="Liu D."/>
            <person name="Zhang X."/>
            <person name="Ji Z."/>
            <person name="Zhao W."/>
            <person name="Sun Y."/>
            <person name="Zhang Z."/>
            <person name="Bao J."/>
            <person name="Han Y."/>
            <person name="Dong L."/>
            <person name="Ji J."/>
            <person name="Chen P."/>
            <person name="Wu S."/>
            <person name="Liu J."/>
            <person name="Xiao Y."/>
            <person name="Bu D."/>
            <person name="Tan J."/>
            <person name="Yang L."/>
            <person name="Ye C."/>
            <person name="Zhang J."/>
            <person name="Xu J."/>
            <person name="Zhou Y."/>
            <person name="Yu Y."/>
            <person name="Zhang B."/>
            <person name="Zhuang S."/>
            <person name="Wei H."/>
            <person name="Liu B."/>
            <person name="Lei M."/>
            <person name="Yu H."/>
            <person name="Li Y."/>
            <person name="Xu H."/>
            <person name="Wei S."/>
            <person name="He X."/>
            <person name="Fang L."/>
            <person name="Zhang Z."/>
            <person name="Zhang Y."/>
            <person name="Huang X."/>
            <person name="Su Z."/>
            <person name="Tong W."/>
            <person name="Li J."/>
            <person name="Tong Z."/>
            <person name="Li S."/>
            <person name="Ye J."/>
            <person name="Wang L."/>
            <person name="Fang L."/>
            <person name="Lei T."/>
            <person name="Chen C.-S."/>
            <person name="Chen H.-C."/>
            <person name="Xu Z."/>
            <person name="Li H."/>
            <person name="Huang H."/>
            <person name="Zhang F."/>
            <person name="Xu H."/>
            <person name="Li N."/>
            <person name="Zhao C."/>
            <person name="Li S."/>
            <person name="Dong L."/>
            <person name="Huang Y."/>
            <person name="Li L."/>
            <person name="Xi Y."/>
            <person name="Qi Q."/>
            <person name="Li W."/>
            <person name="Zhang B."/>
            <person name="Hu W."/>
            <person name="Zhang Y."/>
            <person name="Tian X."/>
            <person name="Jiao Y."/>
            <person name="Liang X."/>
            <person name="Jin J."/>
            <person name="Gao L."/>
            <person name="Zheng W."/>
            <person name="Hao B."/>
            <person name="Liu S.-M."/>
            <person name="Wang W."/>
            <person name="Yuan L."/>
            <person name="Cao M."/>
            <person name="McDermott J."/>
            <person name="Samudrala R."/>
            <person name="Wang J."/>
            <person name="Wong G.K.-S."/>
            <person name="Yang H."/>
        </authorList>
    </citation>
    <scope>NUCLEOTIDE SEQUENCE [LARGE SCALE GENOMIC DNA]</scope>
    <source>
        <strain>cv. Nipponbare</strain>
    </source>
</reference>
<reference key="5">
    <citation type="journal article" date="2003" name="Science">
        <title>Collection, mapping, and annotation of over 28,000 cDNA clones from japonica rice.</title>
        <authorList>
            <consortium name="The rice full-length cDNA consortium"/>
        </authorList>
    </citation>
    <scope>NUCLEOTIDE SEQUENCE [LARGE SCALE MRNA]</scope>
    <source>
        <strain>cv. Nipponbare</strain>
    </source>
</reference>
<reference key="6">
    <citation type="journal article" date="2008" name="BMC Genomics">
        <title>Genome-wide analysis of CCCH zinc finger family in Arabidopsis and rice.</title>
        <authorList>
            <person name="Wang D."/>
            <person name="Guo Y."/>
            <person name="Wu C."/>
            <person name="Yang G."/>
            <person name="Li Y."/>
            <person name="Zheng C."/>
        </authorList>
    </citation>
    <scope>NOMENCLATURE</scope>
</reference>
<keyword id="KW-0238">DNA-binding</keyword>
<keyword id="KW-0479">Metal-binding</keyword>
<keyword id="KW-1185">Reference proteome</keyword>
<keyword id="KW-0694">RNA-binding</keyword>
<keyword id="KW-0862">Zinc</keyword>
<keyword id="KW-0863">Zinc-finger</keyword>
<protein>
    <recommendedName>
        <fullName>Zinc finger CCCH domain-containing protein 49</fullName>
        <shortName>OsC3H49</shortName>
    </recommendedName>
</protein>
<proteinExistence type="evidence at transcript level"/>
<comment type="sequence caution" evidence="4">
    <conflict type="frameshift">
        <sequence resource="EMBL" id="AK111689"/>
    </conflict>
</comment>
<gene>
    <name type="ordered locus">Os07g0281000</name>
    <name type="ordered locus">LOC_Os07g18050</name>
    <name evidence="5" type="ORF">OsJ_23846</name>
    <name type="ORF">P0557D09.17</name>
</gene>
<evidence type="ECO:0000255" key="1">
    <source>
        <dbReference type="PROSITE-ProRule" id="PRU00176"/>
    </source>
</evidence>
<evidence type="ECO:0000255" key="2">
    <source>
        <dbReference type="PROSITE-ProRule" id="PRU00723"/>
    </source>
</evidence>
<evidence type="ECO:0000256" key="3">
    <source>
        <dbReference type="SAM" id="MobiDB-lite"/>
    </source>
</evidence>
<evidence type="ECO:0000305" key="4"/>
<evidence type="ECO:0000312" key="5">
    <source>
        <dbReference type="EMBL" id="EEE66965.1"/>
    </source>
</evidence>
<sequence length="486" mass="54335">MAHRLLRDAQADGWERSDFPIICESCLGDNPYVRMLRAEYDKECKICARPFTVFRWRPGRDARYKKTEICQTCCKLKNVCQVCLLDLEYGLPVQVRDTALSTNSNDAIPRSDVNREYFAEEHDRRARAGIDYDSSNGKARANDTILKLQRTAPYYKRNRAHVCSFYVRGECTRGAECPYRHEMPETGELSQQNIKDRYYGVNDPVALKLLSKAGEMPSLTPPDDESIRTLYIGGLDSRVTEQDLRDQFYAHGEIETIRMVLQRACAFVTYTTREGAEKAAEELANKLVIKGVRLKLMWGKPQAPKPEEDEAGRQGHVAHGGMLPRAVISQQQSGDQPQPPGMEGQQQPASASYYFNIPAPPAAERTLYPSMDPQRMGALVESQEGDGKPGPQQAGQGQASSSSGQSYPEPPPPYYHGGQYPPYYPPYGGYMPPPRMPYQQPPQYPAYQPMLAPPAQSQASSLQQPAPATQQLGQGPQQQTTQNGMT</sequence>
<accession>Q6Z358</accession>
<accession>B9FWM8</accession>
<feature type="chain" id="PRO_0000346843" description="Zinc finger CCCH domain-containing protein 49">
    <location>
        <begin position="1"/>
        <end position="486"/>
    </location>
</feature>
<feature type="domain" description="RRM" evidence="1">
    <location>
        <begin position="228"/>
        <end position="301"/>
    </location>
</feature>
<feature type="zinc finger region" description="C3H1-type" evidence="2">
    <location>
        <begin position="157"/>
        <end position="184"/>
    </location>
</feature>
<feature type="region of interest" description="Disordered" evidence="3">
    <location>
        <begin position="329"/>
        <end position="348"/>
    </location>
</feature>
<feature type="region of interest" description="Disordered" evidence="3">
    <location>
        <begin position="379"/>
        <end position="486"/>
    </location>
</feature>
<feature type="compositionally biased region" description="Low complexity" evidence="3">
    <location>
        <begin position="389"/>
        <end position="407"/>
    </location>
</feature>
<feature type="compositionally biased region" description="Low complexity" evidence="3">
    <location>
        <begin position="415"/>
        <end position="430"/>
    </location>
</feature>
<feature type="compositionally biased region" description="Pro residues" evidence="3">
    <location>
        <begin position="431"/>
        <end position="444"/>
    </location>
</feature>
<feature type="compositionally biased region" description="Low complexity" evidence="3">
    <location>
        <begin position="445"/>
        <end position="486"/>
    </location>
</feature>
<name>C3H49_ORYSJ</name>
<dbReference type="EMBL" id="AP005260">
    <property type="protein sequence ID" value="BAC84225.1"/>
    <property type="molecule type" value="Genomic_DNA"/>
</dbReference>
<dbReference type="EMBL" id="AP008213">
    <property type="protein sequence ID" value="BAF21288.1"/>
    <property type="molecule type" value="Genomic_DNA"/>
</dbReference>
<dbReference type="EMBL" id="AP014963">
    <property type="protein sequence ID" value="BAT00985.1"/>
    <property type="molecule type" value="Genomic_DNA"/>
</dbReference>
<dbReference type="EMBL" id="CM000144">
    <property type="protein sequence ID" value="EEE66965.1"/>
    <property type="molecule type" value="Genomic_DNA"/>
</dbReference>
<dbReference type="EMBL" id="AK111689">
    <property type="status" value="NOT_ANNOTATED_CDS"/>
    <property type="molecule type" value="mRNA"/>
</dbReference>
<dbReference type="RefSeq" id="XP_015644715.1">
    <property type="nucleotide sequence ID" value="XM_015789229.1"/>
</dbReference>
<dbReference type="SMR" id="Q6Z358"/>
<dbReference type="FunCoup" id="Q6Z358">
    <property type="interactions" value="2802"/>
</dbReference>
<dbReference type="STRING" id="39947.Q6Z358"/>
<dbReference type="PaxDb" id="39947-Q6Z358"/>
<dbReference type="EnsemblPlants" id="Os07t0281000-01">
    <property type="protein sequence ID" value="Os07t0281000-01"/>
    <property type="gene ID" value="Os07g0281000"/>
</dbReference>
<dbReference type="Gramene" id="Os07t0281000-01">
    <property type="protein sequence ID" value="Os07t0281000-01"/>
    <property type="gene ID" value="Os07g0281000"/>
</dbReference>
<dbReference type="KEGG" id="dosa:Os07g0281000"/>
<dbReference type="eggNOG" id="KOG0153">
    <property type="taxonomic scope" value="Eukaryota"/>
</dbReference>
<dbReference type="HOGENOM" id="CLU_027112_2_0_1"/>
<dbReference type="InParanoid" id="Q6Z358"/>
<dbReference type="OMA" id="CPLRVQW"/>
<dbReference type="OrthoDB" id="10259600at2759"/>
<dbReference type="Proteomes" id="UP000000763">
    <property type="component" value="Chromosome 7"/>
</dbReference>
<dbReference type="Proteomes" id="UP000007752">
    <property type="component" value="Chromosome 7"/>
</dbReference>
<dbReference type="Proteomes" id="UP000059680">
    <property type="component" value="Chromosome 7"/>
</dbReference>
<dbReference type="GO" id="GO:0000974">
    <property type="term" value="C:Prp19 complex"/>
    <property type="evidence" value="ECO:0000318"/>
    <property type="project" value="GO_Central"/>
</dbReference>
<dbReference type="GO" id="GO:0071006">
    <property type="term" value="C:U2-type catalytic step 1 spliceosome"/>
    <property type="evidence" value="ECO:0000318"/>
    <property type="project" value="GO_Central"/>
</dbReference>
<dbReference type="GO" id="GO:0071007">
    <property type="term" value="C:U2-type catalytic step 2 spliceosome"/>
    <property type="evidence" value="ECO:0000318"/>
    <property type="project" value="GO_Central"/>
</dbReference>
<dbReference type="GO" id="GO:0003677">
    <property type="term" value="F:DNA binding"/>
    <property type="evidence" value="ECO:0007669"/>
    <property type="project" value="UniProtKB-KW"/>
</dbReference>
<dbReference type="GO" id="GO:0036002">
    <property type="term" value="F:pre-mRNA binding"/>
    <property type="evidence" value="ECO:0000318"/>
    <property type="project" value="GO_Central"/>
</dbReference>
<dbReference type="GO" id="GO:0017070">
    <property type="term" value="F:U6 snRNA binding"/>
    <property type="evidence" value="ECO:0000318"/>
    <property type="project" value="GO_Central"/>
</dbReference>
<dbReference type="GO" id="GO:0008270">
    <property type="term" value="F:zinc ion binding"/>
    <property type="evidence" value="ECO:0007669"/>
    <property type="project" value="UniProtKB-KW"/>
</dbReference>
<dbReference type="CDD" id="cd12224">
    <property type="entry name" value="RRM_RBM22"/>
    <property type="match status" value="1"/>
</dbReference>
<dbReference type="FunFam" id="4.10.1000.10:FF:000036">
    <property type="entry name" value="Zinc finger CCCH domain-containing protein 4"/>
    <property type="match status" value="1"/>
</dbReference>
<dbReference type="FunFam" id="3.30.70.330:FF:000347">
    <property type="entry name" value="Zinc finger CCCH domain-containing protein 40"/>
    <property type="match status" value="1"/>
</dbReference>
<dbReference type="Gene3D" id="3.30.70.330">
    <property type="match status" value="1"/>
</dbReference>
<dbReference type="Gene3D" id="4.10.1000.10">
    <property type="entry name" value="Zinc finger, CCCH-type"/>
    <property type="match status" value="1"/>
</dbReference>
<dbReference type="InterPro" id="IPR039171">
    <property type="entry name" value="Cwc2/Slt11"/>
</dbReference>
<dbReference type="InterPro" id="IPR012677">
    <property type="entry name" value="Nucleotide-bd_a/b_plait_sf"/>
</dbReference>
<dbReference type="InterPro" id="IPR035979">
    <property type="entry name" value="RBD_domain_sf"/>
</dbReference>
<dbReference type="InterPro" id="IPR000504">
    <property type="entry name" value="RRM_dom"/>
</dbReference>
<dbReference type="InterPro" id="IPR048995">
    <property type="entry name" value="STL11/RBM22-like_N"/>
</dbReference>
<dbReference type="InterPro" id="IPR032297">
    <property type="entry name" value="Torus"/>
</dbReference>
<dbReference type="InterPro" id="IPR000571">
    <property type="entry name" value="Znf_CCCH"/>
</dbReference>
<dbReference type="InterPro" id="IPR036855">
    <property type="entry name" value="Znf_CCCH_sf"/>
</dbReference>
<dbReference type="PANTHER" id="PTHR14089">
    <property type="entry name" value="PRE-MRNA-SPLICING FACTOR RBM22"/>
    <property type="match status" value="1"/>
</dbReference>
<dbReference type="PANTHER" id="PTHR14089:SF6">
    <property type="entry name" value="PRE-MRNA-SPLICING FACTOR RBM22"/>
    <property type="match status" value="1"/>
</dbReference>
<dbReference type="Pfam" id="PF00076">
    <property type="entry name" value="RRM_1"/>
    <property type="match status" value="1"/>
</dbReference>
<dbReference type="Pfam" id="PF21369">
    <property type="entry name" value="STL11_N"/>
    <property type="match status" value="1"/>
</dbReference>
<dbReference type="Pfam" id="PF16131">
    <property type="entry name" value="Torus"/>
    <property type="match status" value="1"/>
</dbReference>
<dbReference type="SMART" id="SM00360">
    <property type="entry name" value="RRM"/>
    <property type="match status" value="1"/>
</dbReference>
<dbReference type="SMART" id="SM00356">
    <property type="entry name" value="ZnF_C3H1"/>
    <property type="match status" value="1"/>
</dbReference>
<dbReference type="SUPFAM" id="SSF90229">
    <property type="entry name" value="CCCH zinc finger"/>
    <property type="match status" value="1"/>
</dbReference>
<dbReference type="SUPFAM" id="SSF54928">
    <property type="entry name" value="RNA-binding domain, RBD"/>
    <property type="match status" value="1"/>
</dbReference>
<dbReference type="PROSITE" id="PS50102">
    <property type="entry name" value="RRM"/>
    <property type="match status" value="1"/>
</dbReference>
<dbReference type="PROSITE" id="PS50103">
    <property type="entry name" value="ZF_C3H1"/>
    <property type="match status" value="1"/>
</dbReference>